<gene>
    <name evidence="1" type="primary">ndhB2</name>
</gene>
<feature type="chain" id="PRO_0000391290" description="NAD(P)H-quinone oxidoreductase subunit 2 B, chloroplastic">
    <location>
        <begin position="1"/>
        <end position="510"/>
    </location>
</feature>
<feature type="transmembrane region" description="Helical" evidence="1">
    <location>
        <begin position="31"/>
        <end position="51"/>
    </location>
</feature>
<feature type="transmembrane region" description="Helical" evidence="1">
    <location>
        <begin position="57"/>
        <end position="77"/>
    </location>
</feature>
<feature type="transmembrane region" description="Helical" evidence="1">
    <location>
        <begin position="99"/>
        <end position="119"/>
    </location>
</feature>
<feature type="transmembrane region" description="Helical" evidence="1">
    <location>
        <begin position="124"/>
        <end position="144"/>
    </location>
</feature>
<feature type="transmembrane region" description="Helical" evidence="1">
    <location>
        <begin position="149"/>
        <end position="169"/>
    </location>
</feature>
<feature type="transmembrane region" description="Helical" evidence="1">
    <location>
        <begin position="183"/>
        <end position="203"/>
    </location>
</feature>
<feature type="transmembrane region" description="Helical" evidence="1">
    <location>
        <begin position="229"/>
        <end position="249"/>
    </location>
</feature>
<feature type="transmembrane region" description="Helical" evidence="1">
    <location>
        <begin position="295"/>
        <end position="315"/>
    </location>
</feature>
<feature type="transmembrane region" description="Helical" evidence="1">
    <location>
        <begin position="323"/>
        <end position="343"/>
    </location>
</feature>
<feature type="transmembrane region" description="Helical" evidence="1">
    <location>
        <begin position="354"/>
        <end position="374"/>
    </location>
</feature>
<feature type="transmembrane region" description="Helical" evidence="1">
    <location>
        <begin position="395"/>
        <end position="415"/>
    </location>
</feature>
<feature type="transmembrane region" description="Helical" evidence="1">
    <location>
        <begin position="418"/>
        <end position="438"/>
    </location>
</feature>
<feature type="transmembrane region" description="Helical" evidence="1">
    <location>
        <begin position="484"/>
        <end position="504"/>
    </location>
</feature>
<geneLocation type="chloroplast"/>
<evidence type="ECO:0000255" key="1">
    <source>
        <dbReference type="HAMAP-Rule" id="MF_00445"/>
    </source>
</evidence>
<sequence length="510" mass="56692">MIWHVQNENFILDSTRIFMKAFHLLLFNGSFIFPECILIFGLILLLMIDLTSDQKDTPWLYFISSTSLVMSITALLFRWREEPMISFSGNFQTNNFNEIFQFLILLCSTLCIPLSVEYIECTEMAITEFLLFVLTATLGGMFLCGANDLITIFVAPECFSLCSYLLSGYTKRDVRSNEATMKYLLMGGASSSILVYGFSWLYGSSGGEIELQEIVNGLINTQMYNSPGISIALISITVGIGFKLSPAPFHQWTPDVYEGSPTPVVAFLSVTSKVAASASATRIFDIPFYFSSNEWHLLLEILAILSMILGNLIAITQTSMKRMLAYSSIGQIGYVIIGIIVGDSNDGYASMITYMLFYIAMNLGTFACIVLFGLRTGTDNIRDYAGLYTKDPFLALSSALCLLSLGGIPPLAGFFGKLYLFWCGWQAGLYFLVSIGLLTSVVSIYYYLKIIKLLMTGRNKEITPHVRNYRRSPLRSNNSIELSMIVCVIASTIPGISMNPIIAIAQDTLF</sequence>
<name>NU2C2_NYMAL</name>
<comment type="function">
    <text evidence="1">NDH shuttles electrons from NAD(P)H:plastoquinone, via FMN and iron-sulfur (Fe-S) centers, to quinones in the photosynthetic chain and possibly in a chloroplast respiratory chain. The immediate electron acceptor for the enzyme in this species is believed to be plastoquinone. Couples the redox reaction to proton translocation, and thus conserves the redox energy in a proton gradient.</text>
</comment>
<comment type="catalytic activity">
    <reaction evidence="1">
        <text>a plastoquinone + NADH + (n+1) H(+)(in) = a plastoquinol + NAD(+) + n H(+)(out)</text>
        <dbReference type="Rhea" id="RHEA:42608"/>
        <dbReference type="Rhea" id="RHEA-COMP:9561"/>
        <dbReference type="Rhea" id="RHEA-COMP:9562"/>
        <dbReference type="ChEBI" id="CHEBI:15378"/>
        <dbReference type="ChEBI" id="CHEBI:17757"/>
        <dbReference type="ChEBI" id="CHEBI:57540"/>
        <dbReference type="ChEBI" id="CHEBI:57945"/>
        <dbReference type="ChEBI" id="CHEBI:62192"/>
    </reaction>
</comment>
<comment type="catalytic activity">
    <reaction evidence="1">
        <text>a plastoquinone + NADPH + (n+1) H(+)(in) = a plastoquinol + NADP(+) + n H(+)(out)</text>
        <dbReference type="Rhea" id="RHEA:42612"/>
        <dbReference type="Rhea" id="RHEA-COMP:9561"/>
        <dbReference type="Rhea" id="RHEA-COMP:9562"/>
        <dbReference type="ChEBI" id="CHEBI:15378"/>
        <dbReference type="ChEBI" id="CHEBI:17757"/>
        <dbReference type="ChEBI" id="CHEBI:57783"/>
        <dbReference type="ChEBI" id="CHEBI:58349"/>
        <dbReference type="ChEBI" id="CHEBI:62192"/>
    </reaction>
</comment>
<comment type="subunit">
    <text evidence="1">NDH is composed of at least 16 different subunits, 5 of which are encoded in the nucleus.</text>
</comment>
<comment type="subcellular location">
    <subcellularLocation>
        <location evidence="1">Plastid</location>
        <location evidence="1">Chloroplast thylakoid membrane</location>
        <topology evidence="1">Multi-pass membrane protein</topology>
    </subcellularLocation>
</comment>
<comment type="similarity">
    <text evidence="1">Belongs to the complex I subunit 2 family.</text>
</comment>
<accession>P0CD05</accession>
<accession>Q6EVY9</accession>
<protein>
    <recommendedName>
        <fullName evidence="1">NAD(P)H-quinone oxidoreductase subunit 2 B, chloroplastic</fullName>
        <ecNumber evidence="1">7.1.1.-</ecNumber>
    </recommendedName>
    <alternativeName>
        <fullName evidence="1">NAD(P)H dehydrogenase, subunit 2 B</fullName>
    </alternativeName>
    <alternativeName>
        <fullName evidence="1">NADH-plastoquinone oxidoreductase subunit 2 B</fullName>
    </alternativeName>
</protein>
<reference key="1">
    <citation type="journal article" date="2004" name="Mol. Biol. Evol.">
        <title>The chloroplast genome of Nymphaea alba: whole-genome analyses and the problem of identifying the most basal angiosperm.</title>
        <authorList>
            <person name="Goremykin V.V."/>
            <person name="Hirsch-Ernst K.I."/>
            <person name="Woelfl S."/>
            <person name="Hellwig F.H."/>
        </authorList>
    </citation>
    <scope>NUCLEOTIDE SEQUENCE [LARGE SCALE GENOMIC DNA]</scope>
</reference>
<organism>
    <name type="scientific">Nymphaea alba</name>
    <name type="common">White water-lily</name>
    <name type="synonym">Castalia alba</name>
    <dbReference type="NCBI Taxonomy" id="34301"/>
    <lineage>
        <taxon>Eukaryota</taxon>
        <taxon>Viridiplantae</taxon>
        <taxon>Streptophyta</taxon>
        <taxon>Embryophyta</taxon>
        <taxon>Tracheophyta</taxon>
        <taxon>Spermatophyta</taxon>
        <taxon>Magnoliopsida</taxon>
        <taxon>Nymphaeales</taxon>
        <taxon>Nymphaeaceae</taxon>
        <taxon>Nymphaea</taxon>
    </lineage>
</organism>
<keyword id="KW-0150">Chloroplast</keyword>
<keyword id="KW-0472">Membrane</keyword>
<keyword id="KW-0520">NAD</keyword>
<keyword id="KW-0521">NADP</keyword>
<keyword id="KW-0934">Plastid</keyword>
<keyword id="KW-0618">Plastoquinone</keyword>
<keyword id="KW-0874">Quinone</keyword>
<keyword id="KW-0793">Thylakoid</keyword>
<keyword id="KW-1278">Translocase</keyword>
<keyword id="KW-0812">Transmembrane</keyword>
<keyword id="KW-1133">Transmembrane helix</keyword>
<keyword id="KW-0813">Transport</keyword>
<proteinExistence type="inferred from homology"/>
<dbReference type="EC" id="7.1.1.-" evidence="1"/>
<dbReference type="EMBL" id="AJ627251">
    <property type="protein sequence ID" value="CAF28640.1"/>
    <property type="molecule type" value="Genomic_DNA"/>
</dbReference>
<dbReference type="SMR" id="P0CD05"/>
<dbReference type="GO" id="GO:0009535">
    <property type="term" value="C:chloroplast thylakoid membrane"/>
    <property type="evidence" value="ECO:0007669"/>
    <property type="project" value="UniProtKB-SubCell"/>
</dbReference>
<dbReference type="GO" id="GO:0008137">
    <property type="term" value="F:NADH dehydrogenase (ubiquinone) activity"/>
    <property type="evidence" value="ECO:0007669"/>
    <property type="project" value="InterPro"/>
</dbReference>
<dbReference type="GO" id="GO:0048038">
    <property type="term" value="F:quinone binding"/>
    <property type="evidence" value="ECO:0007669"/>
    <property type="project" value="UniProtKB-KW"/>
</dbReference>
<dbReference type="GO" id="GO:0042773">
    <property type="term" value="P:ATP synthesis coupled electron transport"/>
    <property type="evidence" value="ECO:0007669"/>
    <property type="project" value="InterPro"/>
</dbReference>
<dbReference type="GO" id="GO:0019684">
    <property type="term" value="P:photosynthesis, light reaction"/>
    <property type="evidence" value="ECO:0007669"/>
    <property type="project" value="UniProtKB-UniRule"/>
</dbReference>
<dbReference type="HAMAP" id="MF_00445">
    <property type="entry name" value="NDH1_NuoN_1"/>
    <property type="match status" value="1"/>
</dbReference>
<dbReference type="InterPro" id="IPR010096">
    <property type="entry name" value="NADH-Q_OxRdtase_suN/2"/>
</dbReference>
<dbReference type="InterPro" id="IPR001750">
    <property type="entry name" value="ND/Mrp_TM"/>
</dbReference>
<dbReference type="InterPro" id="IPR045693">
    <property type="entry name" value="Ndh2_N"/>
</dbReference>
<dbReference type="NCBIfam" id="TIGR01770">
    <property type="entry name" value="NDH_I_N"/>
    <property type="match status" value="1"/>
</dbReference>
<dbReference type="NCBIfam" id="NF002701">
    <property type="entry name" value="PRK02504.1"/>
    <property type="match status" value="1"/>
</dbReference>
<dbReference type="PANTHER" id="PTHR22773">
    <property type="entry name" value="NADH DEHYDROGENASE"/>
    <property type="match status" value="1"/>
</dbReference>
<dbReference type="Pfam" id="PF19530">
    <property type="entry name" value="Ndh2_N"/>
    <property type="match status" value="1"/>
</dbReference>
<dbReference type="Pfam" id="PF00361">
    <property type="entry name" value="Proton_antipo_M"/>
    <property type="match status" value="1"/>
</dbReference>
<dbReference type="PRINTS" id="PR01434">
    <property type="entry name" value="NADHDHGNASE5"/>
</dbReference>